<reference key="1">
    <citation type="journal article" date="2008" name="Environ. Microbiol.">
        <title>The complete genome sequence of Moorella thermoacetica (f. Clostridium thermoaceticum).</title>
        <authorList>
            <person name="Pierce E."/>
            <person name="Xie G."/>
            <person name="Barabote R.D."/>
            <person name="Saunders E."/>
            <person name="Han C.S."/>
            <person name="Detter J.C."/>
            <person name="Richardson P."/>
            <person name="Brettin T.S."/>
            <person name="Das A."/>
            <person name="Ljungdahl L.G."/>
            <person name="Ragsdale S.W."/>
        </authorList>
    </citation>
    <scope>NUCLEOTIDE SEQUENCE [LARGE SCALE GENOMIC DNA]</scope>
    <source>
        <strain>ATCC 39073 / JCM 9320</strain>
    </source>
</reference>
<dbReference type="EMBL" id="CP000232">
    <property type="protein sequence ID" value="ABC20738.1"/>
    <property type="molecule type" value="Genomic_DNA"/>
</dbReference>
<dbReference type="RefSeq" id="YP_431281.1">
    <property type="nucleotide sequence ID" value="NC_007644.1"/>
</dbReference>
<dbReference type="SMR" id="Q2RFQ1"/>
<dbReference type="STRING" id="264732.Moth_2456"/>
<dbReference type="EnsemblBacteria" id="ABC20738">
    <property type="protein sequence ID" value="ABC20738"/>
    <property type="gene ID" value="Moth_2456"/>
</dbReference>
<dbReference type="KEGG" id="mta:Moth_2456"/>
<dbReference type="PATRIC" id="fig|264732.11.peg.2674"/>
<dbReference type="eggNOG" id="COG0185">
    <property type="taxonomic scope" value="Bacteria"/>
</dbReference>
<dbReference type="HOGENOM" id="CLU_144911_0_1_9"/>
<dbReference type="OrthoDB" id="9797833at2"/>
<dbReference type="GO" id="GO:0005737">
    <property type="term" value="C:cytoplasm"/>
    <property type="evidence" value="ECO:0007669"/>
    <property type="project" value="UniProtKB-ARBA"/>
</dbReference>
<dbReference type="GO" id="GO:0015935">
    <property type="term" value="C:small ribosomal subunit"/>
    <property type="evidence" value="ECO:0007669"/>
    <property type="project" value="InterPro"/>
</dbReference>
<dbReference type="GO" id="GO:0019843">
    <property type="term" value="F:rRNA binding"/>
    <property type="evidence" value="ECO:0007669"/>
    <property type="project" value="UniProtKB-UniRule"/>
</dbReference>
<dbReference type="GO" id="GO:0003735">
    <property type="term" value="F:structural constituent of ribosome"/>
    <property type="evidence" value="ECO:0007669"/>
    <property type="project" value="InterPro"/>
</dbReference>
<dbReference type="GO" id="GO:0000028">
    <property type="term" value="P:ribosomal small subunit assembly"/>
    <property type="evidence" value="ECO:0007669"/>
    <property type="project" value="TreeGrafter"/>
</dbReference>
<dbReference type="GO" id="GO:0006412">
    <property type="term" value="P:translation"/>
    <property type="evidence" value="ECO:0007669"/>
    <property type="project" value="UniProtKB-UniRule"/>
</dbReference>
<dbReference type="FunFam" id="3.30.860.10:FF:000001">
    <property type="entry name" value="30S ribosomal protein S19"/>
    <property type="match status" value="1"/>
</dbReference>
<dbReference type="Gene3D" id="3.30.860.10">
    <property type="entry name" value="30s Ribosomal Protein S19, Chain A"/>
    <property type="match status" value="1"/>
</dbReference>
<dbReference type="HAMAP" id="MF_00531">
    <property type="entry name" value="Ribosomal_uS19"/>
    <property type="match status" value="1"/>
</dbReference>
<dbReference type="InterPro" id="IPR002222">
    <property type="entry name" value="Ribosomal_uS19"/>
</dbReference>
<dbReference type="InterPro" id="IPR005732">
    <property type="entry name" value="Ribosomal_uS19_bac-type"/>
</dbReference>
<dbReference type="InterPro" id="IPR020934">
    <property type="entry name" value="Ribosomal_uS19_CS"/>
</dbReference>
<dbReference type="InterPro" id="IPR023575">
    <property type="entry name" value="Ribosomal_uS19_SF"/>
</dbReference>
<dbReference type="NCBIfam" id="TIGR01050">
    <property type="entry name" value="rpsS_bact"/>
    <property type="match status" value="1"/>
</dbReference>
<dbReference type="PANTHER" id="PTHR11880">
    <property type="entry name" value="RIBOSOMAL PROTEIN S19P FAMILY MEMBER"/>
    <property type="match status" value="1"/>
</dbReference>
<dbReference type="PANTHER" id="PTHR11880:SF8">
    <property type="entry name" value="SMALL RIBOSOMAL SUBUNIT PROTEIN US19M"/>
    <property type="match status" value="1"/>
</dbReference>
<dbReference type="Pfam" id="PF00203">
    <property type="entry name" value="Ribosomal_S19"/>
    <property type="match status" value="1"/>
</dbReference>
<dbReference type="PIRSF" id="PIRSF002144">
    <property type="entry name" value="Ribosomal_S19"/>
    <property type="match status" value="1"/>
</dbReference>
<dbReference type="PRINTS" id="PR00975">
    <property type="entry name" value="RIBOSOMALS19"/>
</dbReference>
<dbReference type="SUPFAM" id="SSF54570">
    <property type="entry name" value="Ribosomal protein S19"/>
    <property type="match status" value="1"/>
</dbReference>
<dbReference type="PROSITE" id="PS00323">
    <property type="entry name" value="RIBOSOMAL_S19"/>
    <property type="match status" value="1"/>
</dbReference>
<comment type="function">
    <text evidence="1">Protein S19 forms a complex with S13 that binds strongly to the 16S ribosomal RNA.</text>
</comment>
<comment type="similarity">
    <text evidence="1">Belongs to the universal ribosomal protein uS19 family.</text>
</comment>
<organism>
    <name type="scientific">Moorella thermoacetica (strain ATCC 39073 / JCM 9320)</name>
    <dbReference type="NCBI Taxonomy" id="264732"/>
    <lineage>
        <taxon>Bacteria</taxon>
        <taxon>Bacillati</taxon>
        <taxon>Bacillota</taxon>
        <taxon>Clostridia</taxon>
        <taxon>Moorellales</taxon>
        <taxon>Moorellaceae</taxon>
        <taxon>Moorella</taxon>
    </lineage>
</organism>
<protein>
    <recommendedName>
        <fullName evidence="1">Small ribosomal subunit protein uS19</fullName>
    </recommendedName>
    <alternativeName>
        <fullName evidence="2">30S ribosomal protein S19</fullName>
    </alternativeName>
</protein>
<keyword id="KW-0687">Ribonucleoprotein</keyword>
<keyword id="KW-0689">Ribosomal protein</keyword>
<keyword id="KW-0694">RNA-binding</keyword>
<keyword id="KW-0699">rRNA-binding</keyword>
<sequence length="94" mass="10698">MGRSLKKGPYCDAKLLKKIIDMNEKGEKRVIKTWSRRSTIFPEMVGHTIAVHDGRKHVPIYITEDMVGHKLGEFAPTRVFRGHGAHTERSTALK</sequence>
<accession>Q2RFQ1</accession>
<gene>
    <name evidence="1" type="primary">rpsS</name>
    <name type="ordered locus">Moth_2456</name>
</gene>
<name>RS19_MOOTA</name>
<evidence type="ECO:0000255" key="1">
    <source>
        <dbReference type="HAMAP-Rule" id="MF_00531"/>
    </source>
</evidence>
<evidence type="ECO:0000305" key="2"/>
<feature type="chain" id="PRO_0000265382" description="Small ribosomal subunit protein uS19">
    <location>
        <begin position="1"/>
        <end position="94"/>
    </location>
</feature>
<proteinExistence type="inferred from homology"/>